<reference key="1">
    <citation type="submission" date="2000-03" db="EMBL/GenBank/DDBJ databases">
        <title>Modulation of endothelium by tumor environment.</title>
        <authorList>
            <person name="Bani M.R."/>
            <person name="Giavazzi R."/>
        </authorList>
    </citation>
    <scope>NUCLEOTIDE SEQUENCE [MRNA]</scope>
</reference>
<reference key="2">
    <citation type="journal article" date="2002" name="J. Biol. Chem.">
        <title>Two different targeting signals direct human peroxisomal membrane protein 22 to peroxisomes.</title>
        <authorList>
            <person name="Brosius U."/>
            <person name="Dehmel T."/>
            <person name="Gaertner J."/>
        </authorList>
    </citation>
    <scope>NUCLEOTIDE SEQUENCE [MRNA]</scope>
    <source>
        <tissue>Retina</tissue>
    </source>
</reference>
<reference key="3">
    <citation type="journal article" date="2004" name="Genome Res.">
        <title>The status, quality, and expansion of the NIH full-length cDNA project: the Mammalian Gene Collection (MGC).</title>
        <authorList>
            <consortium name="The MGC Project Team"/>
        </authorList>
    </citation>
    <scope>NUCLEOTIDE SEQUENCE [LARGE SCALE MRNA]</scope>
    <source>
        <tissue>Retinoblastoma</tissue>
    </source>
</reference>
<reference key="4">
    <citation type="journal article" date="2000" name="J. Cell Biol.">
        <title>PEX19 binds multiple peroxisomal membrane proteins, is predominantly cytoplasmic, and is required for peroxisome membrane synthesis.</title>
        <authorList>
            <person name="Sacksteder K.A."/>
            <person name="Jones J.M."/>
            <person name="South S.T."/>
            <person name="Li X."/>
            <person name="Liu Y."/>
            <person name="Gould S.J."/>
        </authorList>
    </citation>
    <scope>INTERACTION WITH PEX19</scope>
</reference>
<reference key="5">
    <citation type="journal article" date="2006" name="Mol. Cell. Biochem.">
        <title>The zinc containing pro-apoptotic protein siva interacts with the peroxisomal membrane protein pmp22.</title>
        <authorList>
            <person name="Nestler M."/>
            <person name="Martin U."/>
            <person name="Hortschansky P."/>
            <person name="Saluz H.-P."/>
            <person name="Henke A."/>
            <person name="Munder T."/>
        </authorList>
    </citation>
    <scope>INTERACTION WITH SIVA1</scope>
</reference>
<reference key="6">
    <citation type="journal article" date="2011" name="BMC Syst. Biol.">
        <title>Initial characterization of the human central proteome.</title>
        <authorList>
            <person name="Burkard T.R."/>
            <person name="Planyavsky M."/>
            <person name="Kaupe I."/>
            <person name="Breitwieser F.P."/>
            <person name="Buerckstuemmer T."/>
            <person name="Bennett K.L."/>
            <person name="Superti-Furga G."/>
            <person name="Colinge J."/>
        </authorList>
    </citation>
    <scope>IDENTIFICATION BY MASS SPECTROMETRY [LARGE SCALE ANALYSIS]</scope>
</reference>
<feature type="chain" id="PRO_0000218929" description="Peroxisomal membrane protein 2">
    <location>
        <begin position="1"/>
        <end position="195"/>
    </location>
</feature>
<feature type="topological domain" description="Cytoplasmic" evidence="1">
    <location>
        <begin position="1"/>
        <end position="30"/>
    </location>
</feature>
<feature type="transmembrane region" description="Helical" evidence="1">
    <location>
        <begin position="31"/>
        <end position="51"/>
    </location>
</feature>
<feature type="topological domain" description="Peroxisomal" evidence="1">
    <location>
        <begin position="52"/>
        <end position="75"/>
    </location>
</feature>
<feature type="transmembrane region" description="Helical" evidence="1">
    <location>
        <begin position="76"/>
        <end position="96"/>
    </location>
</feature>
<feature type="topological domain" description="Cytoplasmic" evidence="1">
    <location>
        <begin position="97"/>
        <end position="114"/>
    </location>
</feature>
<feature type="transmembrane region" description="Helical" evidence="1">
    <location>
        <begin position="115"/>
        <end position="135"/>
    </location>
</feature>
<feature type="topological domain" description="Peroxisomal" evidence="1">
    <location>
        <begin position="136"/>
        <end position="173"/>
    </location>
</feature>
<feature type="transmembrane region" description="Helical" evidence="1">
    <location>
        <begin position="174"/>
        <end position="194"/>
    </location>
</feature>
<gene>
    <name type="primary">PXMP2</name>
    <name type="synonym">PMP22</name>
</gene>
<dbReference type="EMBL" id="AF250136">
    <property type="protein sequence ID" value="AAF73963.1"/>
    <property type="molecule type" value="mRNA"/>
</dbReference>
<dbReference type="EMBL" id="AY044439">
    <property type="protein sequence ID" value="AAK95858.1"/>
    <property type="molecule type" value="mRNA"/>
</dbReference>
<dbReference type="EMBL" id="BC073997">
    <property type="protein sequence ID" value="AAH73997.1"/>
    <property type="molecule type" value="mRNA"/>
</dbReference>
<dbReference type="CCDS" id="CCDS9279.1"/>
<dbReference type="RefSeq" id="NP_061133.1">
    <property type="nucleotide sequence ID" value="NM_018663.3"/>
</dbReference>
<dbReference type="BioGRID" id="111785">
    <property type="interactions" value="282"/>
</dbReference>
<dbReference type="FunCoup" id="Q9NR77">
    <property type="interactions" value="536"/>
</dbReference>
<dbReference type="IntAct" id="Q9NR77">
    <property type="interactions" value="45"/>
</dbReference>
<dbReference type="MINT" id="Q9NR77"/>
<dbReference type="STRING" id="9606.ENSP00000321271"/>
<dbReference type="TCDB" id="1.A.126.1.3">
    <property type="family name" value="the mpv17/pmp22 4 tms putative channel (mpv17) family"/>
</dbReference>
<dbReference type="iPTMnet" id="Q9NR77"/>
<dbReference type="PhosphoSitePlus" id="Q9NR77"/>
<dbReference type="BioMuta" id="PXMP2"/>
<dbReference type="DMDM" id="27923831"/>
<dbReference type="jPOST" id="Q9NR77"/>
<dbReference type="MassIVE" id="Q9NR77"/>
<dbReference type="PaxDb" id="9606-ENSP00000321271"/>
<dbReference type="PeptideAtlas" id="Q9NR77"/>
<dbReference type="ProteomicsDB" id="82292"/>
<dbReference type="Pumba" id="Q9NR77"/>
<dbReference type="TopDownProteomics" id="Q9NR77"/>
<dbReference type="Antibodypedia" id="53709">
    <property type="antibodies" value="110 antibodies from 21 providers"/>
</dbReference>
<dbReference type="DNASU" id="5827"/>
<dbReference type="Ensembl" id="ENST00000317479.8">
    <property type="protein sequence ID" value="ENSP00000321271.3"/>
    <property type="gene ID" value="ENSG00000176894.10"/>
</dbReference>
<dbReference type="GeneID" id="5827"/>
<dbReference type="KEGG" id="hsa:5827"/>
<dbReference type="MANE-Select" id="ENST00000317479.8">
    <property type="protein sequence ID" value="ENSP00000321271.3"/>
    <property type="RefSeq nucleotide sequence ID" value="NM_018663.3"/>
    <property type="RefSeq protein sequence ID" value="NP_061133.1"/>
</dbReference>
<dbReference type="UCSC" id="uc001ukt.3">
    <property type="organism name" value="human"/>
</dbReference>
<dbReference type="AGR" id="HGNC:9716"/>
<dbReference type="CTD" id="5827"/>
<dbReference type="DisGeNET" id="5827"/>
<dbReference type="GeneCards" id="PXMP2"/>
<dbReference type="HGNC" id="HGNC:9716">
    <property type="gene designation" value="PXMP2"/>
</dbReference>
<dbReference type="HPA" id="ENSG00000176894">
    <property type="expression patterns" value="Tissue enhanced (liver)"/>
</dbReference>
<dbReference type="MIM" id="617399">
    <property type="type" value="gene"/>
</dbReference>
<dbReference type="neXtProt" id="NX_Q9NR77"/>
<dbReference type="OpenTargets" id="ENSG00000176894"/>
<dbReference type="PharmGKB" id="PA34059"/>
<dbReference type="VEuPathDB" id="HostDB:ENSG00000176894"/>
<dbReference type="eggNOG" id="KOG1944">
    <property type="taxonomic scope" value="Eukaryota"/>
</dbReference>
<dbReference type="GeneTree" id="ENSGT00940000161539"/>
<dbReference type="HOGENOM" id="CLU_049109_7_1_1"/>
<dbReference type="InParanoid" id="Q9NR77"/>
<dbReference type="OMA" id="QHSVFAY"/>
<dbReference type="OrthoDB" id="860at2759"/>
<dbReference type="PAN-GO" id="Q9NR77">
    <property type="GO annotations" value="2 GO annotations based on evolutionary models"/>
</dbReference>
<dbReference type="PhylomeDB" id="Q9NR77"/>
<dbReference type="TreeFam" id="TF105311"/>
<dbReference type="PathwayCommons" id="Q9NR77"/>
<dbReference type="Reactome" id="R-HSA-389661">
    <property type="pathway name" value="Glyoxylate metabolism and glycine degradation"/>
</dbReference>
<dbReference type="Reactome" id="R-HSA-9603798">
    <property type="pathway name" value="Class I peroxisomal membrane protein import"/>
</dbReference>
<dbReference type="SignaLink" id="Q9NR77"/>
<dbReference type="BioGRID-ORCS" id="5827">
    <property type="hits" value="12 hits in 1151 CRISPR screens"/>
</dbReference>
<dbReference type="ChiTaRS" id="PXMP2">
    <property type="organism name" value="human"/>
</dbReference>
<dbReference type="GenomeRNAi" id="5827"/>
<dbReference type="Pharos" id="Q9NR77">
    <property type="development level" value="Tbio"/>
</dbReference>
<dbReference type="PRO" id="PR:Q9NR77"/>
<dbReference type="Proteomes" id="UP000005640">
    <property type="component" value="Chromosome 12"/>
</dbReference>
<dbReference type="RNAct" id="Q9NR77">
    <property type="molecule type" value="protein"/>
</dbReference>
<dbReference type="Bgee" id="ENSG00000176894">
    <property type="expression patterns" value="Expressed in right lobe of liver and 99 other cell types or tissues"/>
</dbReference>
<dbReference type="ExpressionAtlas" id="Q9NR77">
    <property type="expression patterns" value="baseline and differential"/>
</dbReference>
<dbReference type="GO" id="GO:0005737">
    <property type="term" value="C:cytoplasm"/>
    <property type="evidence" value="ECO:0000314"/>
    <property type="project" value="UniProtKB"/>
</dbReference>
<dbReference type="GO" id="GO:0005829">
    <property type="term" value="C:cytosol"/>
    <property type="evidence" value="ECO:0000304"/>
    <property type="project" value="Reactome"/>
</dbReference>
<dbReference type="GO" id="GO:0016020">
    <property type="term" value="C:membrane"/>
    <property type="evidence" value="ECO:0007005"/>
    <property type="project" value="UniProtKB"/>
</dbReference>
<dbReference type="GO" id="GO:0005778">
    <property type="term" value="C:peroxisomal membrane"/>
    <property type="evidence" value="ECO:0000314"/>
    <property type="project" value="UniProtKB"/>
</dbReference>
<dbReference type="GO" id="GO:0032991">
    <property type="term" value="C:protein-containing complex"/>
    <property type="evidence" value="ECO:0000314"/>
    <property type="project" value="UniProtKB"/>
</dbReference>
<dbReference type="InterPro" id="IPR007248">
    <property type="entry name" value="Mpv17_PMP22"/>
</dbReference>
<dbReference type="PANTHER" id="PTHR11266:SF80">
    <property type="entry name" value="PEROXISOMAL MEMBRANE PROTEIN 2"/>
    <property type="match status" value="1"/>
</dbReference>
<dbReference type="PANTHER" id="PTHR11266">
    <property type="entry name" value="PEROXISOMAL MEMBRANE PROTEIN 2, PXMP2 MPV17"/>
    <property type="match status" value="1"/>
</dbReference>
<dbReference type="Pfam" id="PF04117">
    <property type="entry name" value="Mpv17_PMP22"/>
    <property type="match status" value="1"/>
</dbReference>
<accession>Q9NR77</accession>
<proteinExistence type="evidence at protein level"/>
<evidence type="ECO:0000255" key="1"/>
<evidence type="ECO:0000269" key="2">
    <source>
    </source>
</evidence>
<evidence type="ECO:0000269" key="3">
    <source>
    </source>
</evidence>
<evidence type="ECO:0000305" key="4"/>
<sequence length="195" mass="22253">MAPAASRLRAEAGLGALPRRALAQYLLFLRLYPVLTKAATSGILSALGNFLAQMIEKKRKKENSRSLDVGGPLRYAVYGFFFTGPLSHFFYFFMEHWIPPEVPLAGLRRLLLDRLVFAPAFLMLFFLIMNFLEGKDASAFAAKMRGGFWPALRMNWRVWTPLQFININYVPLKFRVLFANLAALFWYAYLASLGK</sequence>
<keyword id="KW-0472">Membrane</keyword>
<keyword id="KW-0576">Peroxisome</keyword>
<keyword id="KW-1267">Proteomics identification</keyword>
<keyword id="KW-1185">Reference proteome</keyword>
<keyword id="KW-0812">Transmembrane</keyword>
<keyword id="KW-1133">Transmembrane helix</keyword>
<name>PXMP2_HUMAN</name>
<organism>
    <name type="scientific">Homo sapiens</name>
    <name type="common">Human</name>
    <dbReference type="NCBI Taxonomy" id="9606"/>
    <lineage>
        <taxon>Eukaryota</taxon>
        <taxon>Metazoa</taxon>
        <taxon>Chordata</taxon>
        <taxon>Craniata</taxon>
        <taxon>Vertebrata</taxon>
        <taxon>Euteleostomi</taxon>
        <taxon>Mammalia</taxon>
        <taxon>Eutheria</taxon>
        <taxon>Euarchontoglires</taxon>
        <taxon>Primates</taxon>
        <taxon>Haplorrhini</taxon>
        <taxon>Catarrhini</taxon>
        <taxon>Hominidae</taxon>
        <taxon>Homo</taxon>
    </lineage>
</organism>
<protein>
    <recommendedName>
        <fullName>Peroxisomal membrane protein 2</fullName>
    </recommendedName>
    <alternativeName>
        <fullName>22 kDa peroxisomal membrane protein</fullName>
    </alternativeName>
</protein>
<comment type="function">
    <text>Seems to be involved in pore-forming activity and may contribute to the unspecific permeability of the peroxisomal membrane.</text>
</comment>
<comment type="subunit">
    <text evidence="2 3">Interacts with PEX19 and SIVA1.</text>
</comment>
<comment type="interaction">
    <interactant intactId="EBI-1392944">
        <id>Q9NR77</id>
    </interactant>
    <interactant intactId="EBI-594747">
        <id>P40855</id>
        <label>PEX19</label>
    </interactant>
    <organismsDiffer>false</organismsDiffer>
    <experiments>5</experiments>
</comment>
<comment type="interaction">
    <interactant intactId="EBI-1392944">
        <id>Q9NR77</id>
    </interactant>
    <interactant intactId="EBI-520756">
        <id>O15304</id>
        <label>SIVA1</label>
    </interactant>
    <organismsDiffer>false</organismsDiffer>
    <experiments>3</experiments>
</comment>
<comment type="subcellular location">
    <subcellularLocation>
        <location>Peroxisome membrane</location>
        <topology>Multi-pass membrane protein</topology>
    </subcellularLocation>
</comment>
<comment type="similarity">
    <text evidence="4">Belongs to the peroxisomal membrane protein PXMP2/4 family.</text>
</comment>